<protein>
    <recommendedName>
        <fullName>Probable cGMP 3',5'-cyclic phosphodiesterase subunit delta</fullName>
    </recommendedName>
</protein>
<evidence type="ECO:0000250" key="1">
    <source>
        <dbReference type="UniProtKB" id="Q9VLJ0"/>
    </source>
</evidence>
<evidence type="ECO:0000255" key="2"/>
<evidence type="ECO:0000312" key="3">
    <source>
        <dbReference type="EMBL" id="EDW63754.1"/>
    </source>
</evidence>
<reference evidence="3" key="1">
    <citation type="journal article" date="2007" name="Nature">
        <title>Evolution of genes and genomes on the Drosophila phylogeny.</title>
        <authorList>
            <consortium name="Drosophila 12 genomes consortium"/>
        </authorList>
    </citation>
    <scope>NUCLEOTIDE SEQUENCE [LARGE SCALE GENOMIC DNA]</scope>
    <source>
        <strain evidence="3">Tucson 15010-1051.87</strain>
    </source>
</reference>
<proteinExistence type="inferred from homology"/>
<gene>
    <name evidence="1" type="primary">PrBP</name>
    <name type="ORF">GJ16426</name>
</gene>
<dbReference type="EMBL" id="CH940649">
    <property type="protein sequence ID" value="EDW63754.1"/>
    <property type="molecule type" value="Genomic_DNA"/>
</dbReference>
<dbReference type="RefSeq" id="XP_002051599.1">
    <property type="nucleotide sequence ID" value="XM_002051563.4"/>
</dbReference>
<dbReference type="SMR" id="B4LSE6"/>
<dbReference type="FunCoup" id="B4LSE6">
    <property type="interactions" value="1508"/>
</dbReference>
<dbReference type="STRING" id="7244.B4LSE6"/>
<dbReference type="EnsemblMetazoa" id="FBtr0232351">
    <property type="protein sequence ID" value="FBpp0230843"/>
    <property type="gene ID" value="FBgn0203610"/>
</dbReference>
<dbReference type="EnsemblMetazoa" id="XM_002051563.3">
    <property type="protein sequence ID" value="XP_002051599.1"/>
    <property type="gene ID" value="LOC6629197"/>
</dbReference>
<dbReference type="GeneID" id="6629197"/>
<dbReference type="KEGG" id="dvi:6629197"/>
<dbReference type="CTD" id="34196"/>
<dbReference type="eggNOG" id="KOG4038">
    <property type="taxonomic scope" value="Eukaryota"/>
</dbReference>
<dbReference type="HOGENOM" id="CLU_119682_0_0_1"/>
<dbReference type="InParanoid" id="B4LSE6"/>
<dbReference type="OMA" id="STNTWQN"/>
<dbReference type="OrthoDB" id="10248777at2759"/>
<dbReference type="PhylomeDB" id="B4LSE6"/>
<dbReference type="Proteomes" id="UP000008792">
    <property type="component" value="Unassembled WGS sequence"/>
</dbReference>
<dbReference type="GO" id="GO:0005737">
    <property type="term" value="C:cytoplasm"/>
    <property type="evidence" value="ECO:0000250"/>
    <property type="project" value="UniProtKB"/>
</dbReference>
<dbReference type="GO" id="GO:0005634">
    <property type="term" value="C:nucleus"/>
    <property type="evidence" value="ECO:0000250"/>
    <property type="project" value="UniProtKB"/>
</dbReference>
<dbReference type="GO" id="GO:0050953">
    <property type="term" value="P:sensory perception of light stimulus"/>
    <property type="evidence" value="ECO:0007669"/>
    <property type="project" value="InterPro"/>
</dbReference>
<dbReference type="FunFam" id="2.70.50.40:FF:000002">
    <property type="entry name" value="Retinal rod rhodopsin-sensitive cGMP 3',5'-cyclic phosphodiesterase subunit delta"/>
    <property type="match status" value="1"/>
</dbReference>
<dbReference type="Gene3D" id="2.70.50.40">
    <property type="entry name" value="GMP phosphodiesterase, delta subunit"/>
    <property type="match status" value="1"/>
</dbReference>
<dbReference type="InterPro" id="IPR014756">
    <property type="entry name" value="Ig_E-set"/>
</dbReference>
<dbReference type="InterPro" id="IPR008015">
    <property type="entry name" value="PDED_dom"/>
</dbReference>
<dbReference type="InterPro" id="IPR037036">
    <property type="entry name" value="PDED_dom_sf"/>
</dbReference>
<dbReference type="InterPro" id="IPR017287">
    <property type="entry name" value="Rhodop-sen_GMP-Pdiesterase_dsu"/>
</dbReference>
<dbReference type="PANTHER" id="PTHR12976">
    <property type="entry name" value="RETINAL ROD RHODOPSIN-SENSITIVE CGMP 3',5'-CYCLIC PHOSPHODIESTERASE DELTA-SUBUNIT"/>
    <property type="match status" value="1"/>
</dbReference>
<dbReference type="PANTHER" id="PTHR12976:SF0">
    <property type="entry name" value="RETINAL ROD RHODOPSIN-SENSITIVE CGMP 3',5'-CYCLIC PHOSPHODIESTERASE SUBUNIT DELTA"/>
    <property type="match status" value="1"/>
</dbReference>
<dbReference type="Pfam" id="PF05351">
    <property type="entry name" value="GMP_PDE_delta"/>
    <property type="match status" value="1"/>
</dbReference>
<dbReference type="PIRSF" id="PIRSF037825">
    <property type="entry name" value="GMP-Pdiesterase_delta"/>
    <property type="match status" value="1"/>
</dbReference>
<dbReference type="SUPFAM" id="SSF81296">
    <property type="entry name" value="E set domains"/>
    <property type="match status" value="1"/>
</dbReference>
<name>PDE6D_DROVI</name>
<keyword id="KW-0140">cGMP</keyword>
<keyword id="KW-0963">Cytoplasm</keyword>
<keyword id="KW-0539">Nucleus</keyword>
<keyword id="KW-1185">Reference proteome</keyword>
<feature type="chain" id="PRO_0000363681" description="Probable cGMP 3',5'-cyclic phosphodiesterase subunit delta">
    <location>
        <begin position="1"/>
        <end position="151"/>
    </location>
</feature>
<sequence length="151" mass="17316">MGSDDLSAGDKIQKGFQINYMILRDADTGKVIWQENKDFSAPDVEHEARVPVKILDMRAVSREINFSTIEAMENFRLDQKVLFKGRIMEEWFFEMGFVGANTTNTWQSTIEAAPESQMMPAKVLNGNVTIQTSFYDNETLITKSVVRLYYI</sequence>
<organism>
    <name type="scientific">Drosophila virilis</name>
    <name type="common">Fruit fly</name>
    <dbReference type="NCBI Taxonomy" id="7244"/>
    <lineage>
        <taxon>Eukaryota</taxon>
        <taxon>Metazoa</taxon>
        <taxon>Ecdysozoa</taxon>
        <taxon>Arthropoda</taxon>
        <taxon>Hexapoda</taxon>
        <taxon>Insecta</taxon>
        <taxon>Pterygota</taxon>
        <taxon>Neoptera</taxon>
        <taxon>Endopterygota</taxon>
        <taxon>Diptera</taxon>
        <taxon>Brachycera</taxon>
        <taxon>Muscomorpha</taxon>
        <taxon>Ephydroidea</taxon>
        <taxon>Drosophilidae</taxon>
        <taxon>Drosophila</taxon>
    </lineage>
</organism>
<accession>B4LSE6</accession>
<comment type="subunit">
    <text evidence="1">Interacts with Pde6.</text>
</comment>
<comment type="subcellular location">
    <subcellularLocation>
        <location evidence="1">Nucleus</location>
    </subcellularLocation>
    <subcellularLocation>
        <location evidence="1">Cytoplasm</location>
    </subcellularLocation>
</comment>
<comment type="similarity">
    <text evidence="2">Belongs to the PDE6D/unc-119 family.</text>
</comment>